<comment type="function">
    <text evidence="1">Involved in peptide bond synthesis. Stimulates efficient translation and peptide-bond synthesis on native or reconstituted 70S ribosomes in vitro. Probably functions indirectly by altering the affinity of the ribosome for aminoacyl-tRNA, thus increasing their reactivity as acceptors for peptidyl transferase.</text>
</comment>
<comment type="pathway">
    <text evidence="1">Protein biosynthesis; polypeptide chain elongation.</text>
</comment>
<comment type="subcellular location">
    <subcellularLocation>
        <location evidence="1">Cytoplasm</location>
    </subcellularLocation>
</comment>
<comment type="similarity">
    <text evidence="1">Belongs to the elongation factor P family.</text>
</comment>
<sequence length="184" mass="20514">MKIAQEIRAGNVIMHGKDPMVVLKTEYARGGRGAATVRMKLKSLIANFGTEIVLRADDKIDNVILDKKECTYSYFADPMYVCMDAEYNQYEVEAGNMGDALNYLEDGMALEVVFYDGKAISVELPTSVEREITWTEPAVKGDTSGKVMKPAKIATGFEVPVPLFVAQGDRIEIDTRTGEYRRRV</sequence>
<protein>
    <recommendedName>
        <fullName evidence="1">Elongation factor P</fullName>
        <shortName evidence="1">EF-P</shortName>
    </recommendedName>
</protein>
<accession>A1WMV6</accession>
<gene>
    <name evidence="1" type="primary">efp</name>
    <name type="ordered locus">Veis_3233</name>
</gene>
<name>EFP_VEREI</name>
<organism>
    <name type="scientific">Verminephrobacter eiseniae (strain EF01-2)</name>
    <dbReference type="NCBI Taxonomy" id="391735"/>
    <lineage>
        <taxon>Bacteria</taxon>
        <taxon>Pseudomonadati</taxon>
        <taxon>Pseudomonadota</taxon>
        <taxon>Betaproteobacteria</taxon>
        <taxon>Burkholderiales</taxon>
        <taxon>Comamonadaceae</taxon>
        <taxon>Verminephrobacter</taxon>
    </lineage>
</organism>
<evidence type="ECO:0000255" key="1">
    <source>
        <dbReference type="HAMAP-Rule" id="MF_00141"/>
    </source>
</evidence>
<feature type="chain" id="PRO_1000010895" description="Elongation factor P">
    <location>
        <begin position="1"/>
        <end position="184"/>
    </location>
</feature>
<proteinExistence type="inferred from homology"/>
<keyword id="KW-0963">Cytoplasm</keyword>
<keyword id="KW-0251">Elongation factor</keyword>
<keyword id="KW-0648">Protein biosynthesis</keyword>
<keyword id="KW-1185">Reference proteome</keyword>
<reference key="1">
    <citation type="submission" date="2006-12" db="EMBL/GenBank/DDBJ databases">
        <title>Complete sequence of chromosome 1 of Verminephrobacter eiseniae EF01-2.</title>
        <authorList>
            <person name="Copeland A."/>
            <person name="Lucas S."/>
            <person name="Lapidus A."/>
            <person name="Barry K."/>
            <person name="Detter J.C."/>
            <person name="Glavina del Rio T."/>
            <person name="Dalin E."/>
            <person name="Tice H."/>
            <person name="Pitluck S."/>
            <person name="Chertkov O."/>
            <person name="Brettin T."/>
            <person name="Bruce D."/>
            <person name="Han C."/>
            <person name="Tapia R."/>
            <person name="Gilna P."/>
            <person name="Schmutz J."/>
            <person name="Larimer F."/>
            <person name="Land M."/>
            <person name="Hauser L."/>
            <person name="Kyrpides N."/>
            <person name="Kim E."/>
            <person name="Stahl D."/>
            <person name="Richardson P."/>
        </authorList>
    </citation>
    <scope>NUCLEOTIDE SEQUENCE [LARGE SCALE GENOMIC DNA]</scope>
    <source>
        <strain>EF01-2</strain>
    </source>
</reference>
<dbReference type="EMBL" id="CP000542">
    <property type="protein sequence ID" value="ABM58963.1"/>
    <property type="molecule type" value="Genomic_DNA"/>
</dbReference>
<dbReference type="RefSeq" id="WP_011810955.1">
    <property type="nucleotide sequence ID" value="NC_008786.1"/>
</dbReference>
<dbReference type="SMR" id="A1WMV6"/>
<dbReference type="STRING" id="391735.Veis_3233"/>
<dbReference type="GeneID" id="76461683"/>
<dbReference type="KEGG" id="vei:Veis_3233"/>
<dbReference type="eggNOG" id="COG0231">
    <property type="taxonomic scope" value="Bacteria"/>
</dbReference>
<dbReference type="HOGENOM" id="CLU_074944_2_1_4"/>
<dbReference type="OrthoDB" id="9801844at2"/>
<dbReference type="UniPathway" id="UPA00345"/>
<dbReference type="Proteomes" id="UP000000374">
    <property type="component" value="Chromosome"/>
</dbReference>
<dbReference type="GO" id="GO:0005737">
    <property type="term" value="C:cytoplasm"/>
    <property type="evidence" value="ECO:0007669"/>
    <property type="project" value="UniProtKB-SubCell"/>
</dbReference>
<dbReference type="GO" id="GO:0003746">
    <property type="term" value="F:translation elongation factor activity"/>
    <property type="evidence" value="ECO:0007669"/>
    <property type="project" value="UniProtKB-UniRule"/>
</dbReference>
<dbReference type="GO" id="GO:0043043">
    <property type="term" value="P:peptide biosynthetic process"/>
    <property type="evidence" value="ECO:0007669"/>
    <property type="project" value="InterPro"/>
</dbReference>
<dbReference type="CDD" id="cd05794">
    <property type="entry name" value="S1_EF-P_repeat_2"/>
    <property type="match status" value="1"/>
</dbReference>
<dbReference type="FunFam" id="2.40.50.140:FF:000004">
    <property type="entry name" value="Elongation factor P"/>
    <property type="match status" value="1"/>
</dbReference>
<dbReference type="FunFam" id="2.40.50.140:FF:000009">
    <property type="entry name" value="Elongation factor P"/>
    <property type="match status" value="1"/>
</dbReference>
<dbReference type="Gene3D" id="2.30.30.30">
    <property type="match status" value="1"/>
</dbReference>
<dbReference type="Gene3D" id="2.40.50.140">
    <property type="entry name" value="Nucleic acid-binding proteins"/>
    <property type="match status" value="2"/>
</dbReference>
<dbReference type="HAMAP" id="MF_00141">
    <property type="entry name" value="EF_P"/>
    <property type="match status" value="1"/>
</dbReference>
<dbReference type="InterPro" id="IPR015365">
    <property type="entry name" value="Elong-fact-P_C"/>
</dbReference>
<dbReference type="InterPro" id="IPR012340">
    <property type="entry name" value="NA-bd_OB-fold"/>
</dbReference>
<dbReference type="InterPro" id="IPR014722">
    <property type="entry name" value="Rib_uL2_dom2"/>
</dbReference>
<dbReference type="InterPro" id="IPR020599">
    <property type="entry name" value="Transl_elong_fac_P/YeiP"/>
</dbReference>
<dbReference type="InterPro" id="IPR013185">
    <property type="entry name" value="Transl_elong_KOW-like"/>
</dbReference>
<dbReference type="InterPro" id="IPR001059">
    <property type="entry name" value="Transl_elong_P/YeiP_cen"/>
</dbReference>
<dbReference type="InterPro" id="IPR013852">
    <property type="entry name" value="Transl_elong_P/YeiP_CS"/>
</dbReference>
<dbReference type="InterPro" id="IPR011768">
    <property type="entry name" value="Transl_elongation_fac_P"/>
</dbReference>
<dbReference type="InterPro" id="IPR008991">
    <property type="entry name" value="Translation_prot_SH3-like_sf"/>
</dbReference>
<dbReference type="NCBIfam" id="TIGR00038">
    <property type="entry name" value="efp"/>
    <property type="match status" value="1"/>
</dbReference>
<dbReference type="NCBIfam" id="NF001810">
    <property type="entry name" value="PRK00529.1"/>
    <property type="match status" value="1"/>
</dbReference>
<dbReference type="PANTHER" id="PTHR30053">
    <property type="entry name" value="ELONGATION FACTOR P"/>
    <property type="match status" value="1"/>
</dbReference>
<dbReference type="PANTHER" id="PTHR30053:SF12">
    <property type="entry name" value="ELONGATION FACTOR P (EF-P) FAMILY PROTEIN"/>
    <property type="match status" value="1"/>
</dbReference>
<dbReference type="Pfam" id="PF01132">
    <property type="entry name" value="EFP"/>
    <property type="match status" value="1"/>
</dbReference>
<dbReference type="Pfam" id="PF08207">
    <property type="entry name" value="EFP_N"/>
    <property type="match status" value="1"/>
</dbReference>
<dbReference type="Pfam" id="PF09285">
    <property type="entry name" value="Elong-fact-P_C"/>
    <property type="match status" value="1"/>
</dbReference>
<dbReference type="PIRSF" id="PIRSF005901">
    <property type="entry name" value="EF-P"/>
    <property type="match status" value="1"/>
</dbReference>
<dbReference type="SMART" id="SM01185">
    <property type="entry name" value="EFP"/>
    <property type="match status" value="1"/>
</dbReference>
<dbReference type="SMART" id="SM00841">
    <property type="entry name" value="Elong-fact-P_C"/>
    <property type="match status" value="1"/>
</dbReference>
<dbReference type="SUPFAM" id="SSF50249">
    <property type="entry name" value="Nucleic acid-binding proteins"/>
    <property type="match status" value="2"/>
</dbReference>
<dbReference type="SUPFAM" id="SSF50104">
    <property type="entry name" value="Translation proteins SH3-like domain"/>
    <property type="match status" value="1"/>
</dbReference>
<dbReference type="PROSITE" id="PS01275">
    <property type="entry name" value="EFP"/>
    <property type="match status" value="1"/>
</dbReference>